<accession>Q7TV75</accession>
<name>MIAA_PROMM</name>
<dbReference type="EC" id="2.5.1.75" evidence="1"/>
<dbReference type="EMBL" id="BX548175">
    <property type="protein sequence ID" value="CAE20295.1"/>
    <property type="molecule type" value="Genomic_DNA"/>
</dbReference>
<dbReference type="RefSeq" id="WP_011129499.1">
    <property type="nucleotide sequence ID" value="NC_005071.1"/>
</dbReference>
<dbReference type="SMR" id="Q7TV75"/>
<dbReference type="KEGG" id="pmt:PMT_0120"/>
<dbReference type="eggNOG" id="COG0324">
    <property type="taxonomic scope" value="Bacteria"/>
</dbReference>
<dbReference type="HOGENOM" id="CLU_032616_0_1_3"/>
<dbReference type="OrthoDB" id="9776390at2"/>
<dbReference type="Proteomes" id="UP000001423">
    <property type="component" value="Chromosome"/>
</dbReference>
<dbReference type="GO" id="GO:0005524">
    <property type="term" value="F:ATP binding"/>
    <property type="evidence" value="ECO:0007669"/>
    <property type="project" value="UniProtKB-UniRule"/>
</dbReference>
<dbReference type="GO" id="GO:0052381">
    <property type="term" value="F:tRNA dimethylallyltransferase activity"/>
    <property type="evidence" value="ECO:0007669"/>
    <property type="project" value="UniProtKB-UniRule"/>
</dbReference>
<dbReference type="GO" id="GO:0006400">
    <property type="term" value="P:tRNA modification"/>
    <property type="evidence" value="ECO:0007669"/>
    <property type="project" value="TreeGrafter"/>
</dbReference>
<dbReference type="Gene3D" id="1.10.20.140">
    <property type="match status" value="1"/>
</dbReference>
<dbReference type="Gene3D" id="3.40.50.300">
    <property type="entry name" value="P-loop containing nucleotide triphosphate hydrolases"/>
    <property type="match status" value="1"/>
</dbReference>
<dbReference type="HAMAP" id="MF_00185">
    <property type="entry name" value="IPP_trans"/>
    <property type="match status" value="1"/>
</dbReference>
<dbReference type="InterPro" id="IPR039657">
    <property type="entry name" value="Dimethylallyltransferase"/>
</dbReference>
<dbReference type="InterPro" id="IPR018022">
    <property type="entry name" value="IPT"/>
</dbReference>
<dbReference type="InterPro" id="IPR027417">
    <property type="entry name" value="P-loop_NTPase"/>
</dbReference>
<dbReference type="NCBIfam" id="TIGR00174">
    <property type="entry name" value="miaA"/>
    <property type="match status" value="1"/>
</dbReference>
<dbReference type="PANTHER" id="PTHR11088">
    <property type="entry name" value="TRNA DIMETHYLALLYLTRANSFERASE"/>
    <property type="match status" value="1"/>
</dbReference>
<dbReference type="PANTHER" id="PTHR11088:SF60">
    <property type="entry name" value="TRNA DIMETHYLALLYLTRANSFERASE"/>
    <property type="match status" value="1"/>
</dbReference>
<dbReference type="Pfam" id="PF01715">
    <property type="entry name" value="IPPT"/>
    <property type="match status" value="1"/>
</dbReference>
<dbReference type="SUPFAM" id="SSF52540">
    <property type="entry name" value="P-loop containing nucleoside triphosphate hydrolases"/>
    <property type="match status" value="2"/>
</dbReference>
<protein>
    <recommendedName>
        <fullName evidence="1">tRNA dimethylallyltransferase</fullName>
        <ecNumber evidence="1">2.5.1.75</ecNumber>
    </recommendedName>
    <alternativeName>
        <fullName evidence="1">Dimethylallyl diphosphate:tRNA dimethylallyltransferase</fullName>
        <shortName evidence="1">DMAPP:tRNA dimethylallyltransferase</shortName>
        <shortName evidence="1">DMATase</shortName>
    </alternativeName>
    <alternativeName>
        <fullName evidence="1">Isopentenyl-diphosphate:tRNA isopentenyltransferase</fullName>
        <shortName evidence="1">IPP transferase</shortName>
        <shortName evidence="1">IPPT</shortName>
        <shortName evidence="1">IPTase</shortName>
    </alternativeName>
</protein>
<sequence length="299" mass="33451">MPASKPLLIALLGPTASGKTCLALQLAEQLKLSVLNVDSRQLYIGMDVGTAKPTKEQQRRVQHHLIDLRRPDQPITLQEFQAAAQLILAQKLREQNMPFLVGGSGLYLKALTCGLRPPAVPPQPELRKQLGELGQRTCHHLLQAADPTAANRISPADAMRTQRGLEVVYATGKPITTQQGSSPPPWRVLELGLDPHNLRERIGHRTTQLYANGLIEETEHLSHCYDTDLPLLQTIGYGEALKVIQGLLNREQAIALTTRRTQQFAKRQRTWFRRQHHPYWLKGEEPLSEALSLIQAGLR</sequence>
<organism>
    <name type="scientific">Prochlorococcus marinus (strain MIT 9313)</name>
    <dbReference type="NCBI Taxonomy" id="74547"/>
    <lineage>
        <taxon>Bacteria</taxon>
        <taxon>Bacillati</taxon>
        <taxon>Cyanobacteriota</taxon>
        <taxon>Cyanophyceae</taxon>
        <taxon>Synechococcales</taxon>
        <taxon>Prochlorococcaceae</taxon>
        <taxon>Prochlorococcus</taxon>
    </lineage>
</organism>
<feature type="chain" id="PRO_0000163954" description="tRNA dimethylallyltransferase">
    <location>
        <begin position="1"/>
        <end position="299"/>
    </location>
</feature>
<feature type="region of interest" description="Interaction with substrate tRNA" evidence="1">
    <location>
        <begin position="38"/>
        <end position="41"/>
    </location>
</feature>
<feature type="binding site" evidence="1">
    <location>
        <begin position="13"/>
        <end position="20"/>
    </location>
    <ligand>
        <name>ATP</name>
        <dbReference type="ChEBI" id="CHEBI:30616"/>
    </ligand>
</feature>
<feature type="binding site" evidence="1">
    <location>
        <begin position="15"/>
        <end position="20"/>
    </location>
    <ligand>
        <name>substrate</name>
    </ligand>
</feature>
<feature type="site" description="Interaction with substrate tRNA" evidence="1">
    <location>
        <position position="104"/>
    </location>
</feature>
<keyword id="KW-0067">ATP-binding</keyword>
<keyword id="KW-0460">Magnesium</keyword>
<keyword id="KW-0547">Nucleotide-binding</keyword>
<keyword id="KW-1185">Reference proteome</keyword>
<keyword id="KW-0808">Transferase</keyword>
<keyword id="KW-0819">tRNA processing</keyword>
<evidence type="ECO:0000255" key="1">
    <source>
        <dbReference type="HAMAP-Rule" id="MF_00185"/>
    </source>
</evidence>
<reference key="1">
    <citation type="journal article" date="2003" name="Nature">
        <title>Genome divergence in two Prochlorococcus ecotypes reflects oceanic niche differentiation.</title>
        <authorList>
            <person name="Rocap G."/>
            <person name="Larimer F.W."/>
            <person name="Lamerdin J.E."/>
            <person name="Malfatti S."/>
            <person name="Chain P."/>
            <person name="Ahlgren N.A."/>
            <person name="Arellano A."/>
            <person name="Coleman M."/>
            <person name="Hauser L."/>
            <person name="Hess W.R."/>
            <person name="Johnson Z.I."/>
            <person name="Land M.L."/>
            <person name="Lindell D."/>
            <person name="Post A.F."/>
            <person name="Regala W."/>
            <person name="Shah M."/>
            <person name="Shaw S.L."/>
            <person name="Steglich C."/>
            <person name="Sullivan M.B."/>
            <person name="Ting C.S."/>
            <person name="Tolonen A."/>
            <person name="Webb E.A."/>
            <person name="Zinser E.R."/>
            <person name="Chisholm S.W."/>
        </authorList>
    </citation>
    <scope>NUCLEOTIDE SEQUENCE [LARGE SCALE GENOMIC DNA]</scope>
    <source>
        <strain>MIT 9313</strain>
    </source>
</reference>
<comment type="function">
    <text evidence="1">Catalyzes the transfer of a dimethylallyl group onto the adenine at position 37 in tRNAs that read codons beginning with uridine, leading to the formation of N6-(dimethylallyl)adenosine (i(6)A).</text>
</comment>
<comment type="catalytic activity">
    <reaction evidence="1">
        <text>adenosine(37) in tRNA + dimethylallyl diphosphate = N(6)-dimethylallyladenosine(37) in tRNA + diphosphate</text>
        <dbReference type="Rhea" id="RHEA:26482"/>
        <dbReference type="Rhea" id="RHEA-COMP:10162"/>
        <dbReference type="Rhea" id="RHEA-COMP:10375"/>
        <dbReference type="ChEBI" id="CHEBI:33019"/>
        <dbReference type="ChEBI" id="CHEBI:57623"/>
        <dbReference type="ChEBI" id="CHEBI:74411"/>
        <dbReference type="ChEBI" id="CHEBI:74415"/>
        <dbReference type="EC" id="2.5.1.75"/>
    </reaction>
</comment>
<comment type="cofactor">
    <cofactor evidence="1">
        <name>Mg(2+)</name>
        <dbReference type="ChEBI" id="CHEBI:18420"/>
    </cofactor>
</comment>
<comment type="subunit">
    <text evidence="1">Monomer.</text>
</comment>
<comment type="similarity">
    <text evidence="1">Belongs to the IPP transferase family.</text>
</comment>
<gene>
    <name evidence="1" type="primary">miaA</name>
    <name type="ordered locus">PMT_0120</name>
</gene>
<proteinExistence type="inferred from homology"/>